<comment type="function">
    <text evidence="2">FAD-dependent sulfhydryl oxidase that catalyzes disulfide bond formation.</text>
</comment>
<comment type="catalytic activity">
    <reaction>
        <text>2 R'C(R)SH + O2 = R'C(R)S-S(R)CR' + H2O2</text>
        <dbReference type="Rhea" id="RHEA:17357"/>
        <dbReference type="ChEBI" id="CHEBI:15379"/>
        <dbReference type="ChEBI" id="CHEBI:16240"/>
        <dbReference type="ChEBI" id="CHEBI:16520"/>
        <dbReference type="ChEBI" id="CHEBI:17412"/>
        <dbReference type="EC" id="1.8.3.2"/>
    </reaction>
</comment>
<comment type="cofactor">
    <cofactor evidence="2">
        <name>FAD</name>
        <dbReference type="ChEBI" id="CHEBI:57692"/>
    </cofactor>
</comment>
<comment type="subcellular location">
    <subcellularLocation>
        <location evidence="3">Membrane</location>
        <topology evidence="3">Single-pass membrane protein</topology>
    </subcellularLocation>
</comment>
<name>YR368_MIMIV</name>
<sequence length="143" mass="16981">MSPEQWGIYGWTFSHAVALGYPINPTEEDKLRYYTFFNSYRYVLPCGKCRINYADHLNKYPLTDEVLSSRENLVKWTIDIHNVVNYYTGKKMLTYPEAIEAIEKTLTPKKKSSYNWFFIILIIIGIIVIIYLMYIVFKKKLNK</sequence>
<accession>Q5UQV6</accession>
<reference key="1">
    <citation type="journal article" date="2004" name="Science">
        <title>The 1.2-megabase genome sequence of Mimivirus.</title>
        <authorList>
            <person name="Raoult D."/>
            <person name="Audic S."/>
            <person name="Robert C."/>
            <person name="Abergel C."/>
            <person name="Renesto P."/>
            <person name="Ogata H."/>
            <person name="La Scola B."/>
            <person name="Susan M."/>
            <person name="Claverie J.-M."/>
        </authorList>
    </citation>
    <scope>NUCLEOTIDE SEQUENCE [LARGE SCALE GENOMIC DNA]</scope>
    <source>
        <strain>Rowbotham-Bradford</strain>
    </source>
</reference>
<feature type="chain" id="PRO_0000309199" description="Probable FAD-linked sulfhydryl oxidase R368">
    <location>
        <begin position="1"/>
        <end position="143"/>
    </location>
</feature>
<feature type="transmembrane region" description="Helical" evidence="1">
    <location>
        <begin position="117"/>
        <end position="137"/>
    </location>
</feature>
<feature type="domain" description="ERV/ALR sulfhydryl oxidase" evidence="2">
    <location>
        <begin position="10"/>
        <end position="104"/>
    </location>
</feature>
<feature type="disulfide bond" description="Redox-active" evidence="2">
    <location>
        <begin position="46"/>
        <end position="49"/>
    </location>
</feature>
<organism>
    <name type="scientific">Acanthamoeba polyphaga mimivirus</name>
    <name type="common">APMV</name>
    <dbReference type="NCBI Taxonomy" id="212035"/>
    <lineage>
        <taxon>Viruses</taxon>
        <taxon>Varidnaviria</taxon>
        <taxon>Bamfordvirae</taxon>
        <taxon>Nucleocytoviricota</taxon>
        <taxon>Megaviricetes</taxon>
        <taxon>Imitervirales</taxon>
        <taxon>Mimiviridae</taxon>
        <taxon>Megamimivirinae</taxon>
        <taxon>Mimivirus</taxon>
        <taxon>Mimivirus bradfordmassiliense</taxon>
    </lineage>
</organism>
<keyword id="KW-1015">Disulfide bond</keyword>
<keyword id="KW-0274">FAD</keyword>
<keyword id="KW-0285">Flavoprotein</keyword>
<keyword id="KW-0472">Membrane</keyword>
<keyword id="KW-0560">Oxidoreductase</keyword>
<keyword id="KW-1185">Reference proteome</keyword>
<keyword id="KW-0812">Transmembrane</keyword>
<keyword id="KW-1133">Transmembrane helix</keyword>
<evidence type="ECO:0000255" key="1"/>
<evidence type="ECO:0000255" key="2">
    <source>
        <dbReference type="PROSITE-ProRule" id="PRU00654"/>
    </source>
</evidence>
<evidence type="ECO:0000305" key="3"/>
<proteinExistence type="inferred from homology"/>
<organismHost>
    <name type="scientific">Acanthamoeba polyphaga</name>
    <name type="common">Amoeba</name>
    <dbReference type="NCBI Taxonomy" id="5757"/>
</organismHost>
<gene>
    <name type="ordered locus">MIMI_R368</name>
</gene>
<dbReference type="EC" id="1.8.3.2"/>
<dbReference type="EMBL" id="AY653733">
    <property type="protein sequence ID" value="AAV50637.1"/>
    <property type="molecule type" value="Genomic_DNA"/>
</dbReference>
<dbReference type="SMR" id="Q5UQV6"/>
<dbReference type="KEGG" id="vg:9924989"/>
<dbReference type="OrthoDB" id="14873at10239"/>
<dbReference type="Proteomes" id="UP000001134">
    <property type="component" value="Genome"/>
</dbReference>
<dbReference type="GO" id="GO:0016020">
    <property type="term" value="C:membrane"/>
    <property type="evidence" value="ECO:0007669"/>
    <property type="project" value="UniProtKB-SubCell"/>
</dbReference>
<dbReference type="GO" id="GO:0050660">
    <property type="term" value="F:flavin adenine dinucleotide binding"/>
    <property type="evidence" value="ECO:0007669"/>
    <property type="project" value="TreeGrafter"/>
</dbReference>
<dbReference type="GO" id="GO:0016971">
    <property type="term" value="F:flavin-dependent sulfhydryl oxidase activity"/>
    <property type="evidence" value="ECO:0007669"/>
    <property type="project" value="InterPro"/>
</dbReference>
<dbReference type="Gene3D" id="1.20.120.310">
    <property type="entry name" value="ERV/ALR sulfhydryl oxidase domain"/>
    <property type="match status" value="1"/>
</dbReference>
<dbReference type="InterPro" id="IPR039799">
    <property type="entry name" value="ALR/ERV"/>
</dbReference>
<dbReference type="InterPro" id="IPR036774">
    <property type="entry name" value="ERV/ALR_sulphydryl_oxid_sf"/>
</dbReference>
<dbReference type="InterPro" id="IPR017905">
    <property type="entry name" value="ERV/ALR_sulphydryl_oxidase"/>
</dbReference>
<dbReference type="PANTHER" id="PTHR12645">
    <property type="entry name" value="ALR/ERV"/>
    <property type="match status" value="1"/>
</dbReference>
<dbReference type="PANTHER" id="PTHR12645:SF0">
    <property type="entry name" value="FAD-LINKED SULFHYDRYL OXIDASE ALR"/>
    <property type="match status" value="1"/>
</dbReference>
<dbReference type="Pfam" id="PF04777">
    <property type="entry name" value="Evr1_Alr"/>
    <property type="match status" value="1"/>
</dbReference>
<dbReference type="SUPFAM" id="SSF69000">
    <property type="entry name" value="FAD-dependent thiol oxidase"/>
    <property type="match status" value="1"/>
</dbReference>
<dbReference type="PROSITE" id="PS51324">
    <property type="entry name" value="ERV_ALR"/>
    <property type="match status" value="1"/>
</dbReference>
<protein>
    <recommendedName>
        <fullName>Probable FAD-linked sulfhydryl oxidase R368</fullName>
        <ecNumber>1.8.3.2</ecNumber>
    </recommendedName>
</protein>